<geneLocation type="mitochondrion"/>
<evidence type="ECO:0000250" key="1"/>
<evidence type="ECO:0000250" key="2">
    <source>
        <dbReference type="UniProtKB" id="P00157"/>
    </source>
</evidence>
<evidence type="ECO:0000255" key="3">
    <source>
        <dbReference type="PROSITE-ProRule" id="PRU00967"/>
    </source>
</evidence>
<evidence type="ECO:0000255" key="4">
    <source>
        <dbReference type="PROSITE-ProRule" id="PRU00968"/>
    </source>
</evidence>
<dbReference type="EMBL" id="AY014955">
    <property type="protein sequence ID" value="AAG40514.1"/>
    <property type="molecule type" value="Genomic_DNA"/>
</dbReference>
<dbReference type="SMR" id="Q8SFK5"/>
<dbReference type="GO" id="GO:0005743">
    <property type="term" value="C:mitochondrial inner membrane"/>
    <property type="evidence" value="ECO:0007669"/>
    <property type="project" value="UniProtKB-SubCell"/>
</dbReference>
<dbReference type="GO" id="GO:0045275">
    <property type="term" value="C:respiratory chain complex III"/>
    <property type="evidence" value="ECO:0007669"/>
    <property type="project" value="InterPro"/>
</dbReference>
<dbReference type="GO" id="GO:0046872">
    <property type="term" value="F:metal ion binding"/>
    <property type="evidence" value="ECO:0007669"/>
    <property type="project" value="UniProtKB-KW"/>
</dbReference>
<dbReference type="GO" id="GO:0008121">
    <property type="term" value="F:ubiquinol-cytochrome-c reductase activity"/>
    <property type="evidence" value="ECO:0007669"/>
    <property type="project" value="InterPro"/>
</dbReference>
<dbReference type="GO" id="GO:0006122">
    <property type="term" value="P:mitochondrial electron transport, ubiquinol to cytochrome c"/>
    <property type="evidence" value="ECO:0007669"/>
    <property type="project" value="TreeGrafter"/>
</dbReference>
<dbReference type="CDD" id="cd00290">
    <property type="entry name" value="cytochrome_b_C"/>
    <property type="match status" value="1"/>
</dbReference>
<dbReference type="CDD" id="cd00284">
    <property type="entry name" value="Cytochrome_b_N"/>
    <property type="match status" value="1"/>
</dbReference>
<dbReference type="FunFam" id="1.20.810.10:FF:000002">
    <property type="entry name" value="Cytochrome b"/>
    <property type="match status" value="1"/>
</dbReference>
<dbReference type="Gene3D" id="1.20.810.10">
    <property type="entry name" value="Cytochrome Bc1 Complex, Chain C"/>
    <property type="match status" value="1"/>
</dbReference>
<dbReference type="InterPro" id="IPR005798">
    <property type="entry name" value="Cyt_b/b6_C"/>
</dbReference>
<dbReference type="InterPro" id="IPR036150">
    <property type="entry name" value="Cyt_b/b6_C_sf"/>
</dbReference>
<dbReference type="InterPro" id="IPR005797">
    <property type="entry name" value="Cyt_b/b6_N"/>
</dbReference>
<dbReference type="InterPro" id="IPR027387">
    <property type="entry name" value="Cytb/b6-like_sf"/>
</dbReference>
<dbReference type="InterPro" id="IPR030689">
    <property type="entry name" value="Cytochrome_b"/>
</dbReference>
<dbReference type="InterPro" id="IPR048260">
    <property type="entry name" value="Cytochrome_b_C_euk/bac"/>
</dbReference>
<dbReference type="InterPro" id="IPR048259">
    <property type="entry name" value="Cytochrome_b_N_euk/bac"/>
</dbReference>
<dbReference type="InterPro" id="IPR016174">
    <property type="entry name" value="Di-haem_cyt_TM"/>
</dbReference>
<dbReference type="PANTHER" id="PTHR19271">
    <property type="entry name" value="CYTOCHROME B"/>
    <property type="match status" value="1"/>
</dbReference>
<dbReference type="PANTHER" id="PTHR19271:SF16">
    <property type="entry name" value="CYTOCHROME B"/>
    <property type="match status" value="1"/>
</dbReference>
<dbReference type="Pfam" id="PF00032">
    <property type="entry name" value="Cytochrom_B_C"/>
    <property type="match status" value="1"/>
</dbReference>
<dbReference type="Pfam" id="PF00033">
    <property type="entry name" value="Cytochrome_B"/>
    <property type="match status" value="1"/>
</dbReference>
<dbReference type="PIRSF" id="PIRSF038885">
    <property type="entry name" value="COB"/>
    <property type="match status" value="1"/>
</dbReference>
<dbReference type="SUPFAM" id="SSF81648">
    <property type="entry name" value="a domain/subunit of cytochrome bc1 complex (Ubiquinol-cytochrome c reductase)"/>
    <property type="match status" value="1"/>
</dbReference>
<dbReference type="SUPFAM" id="SSF81342">
    <property type="entry name" value="Transmembrane di-heme cytochromes"/>
    <property type="match status" value="1"/>
</dbReference>
<dbReference type="PROSITE" id="PS51003">
    <property type="entry name" value="CYTB_CTER"/>
    <property type="match status" value="1"/>
</dbReference>
<dbReference type="PROSITE" id="PS51002">
    <property type="entry name" value="CYTB_NTER"/>
    <property type="match status" value="1"/>
</dbReference>
<proteinExistence type="inferred from homology"/>
<accession>Q8SFK5</accession>
<gene>
    <name type="primary">MT-CYB</name>
    <name type="synonym">COB</name>
    <name type="synonym">CYTB</name>
    <name type="synonym">MTCYB</name>
</gene>
<name>CYB_SORTE</name>
<protein>
    <recommendedName>
        <fullName>Cytochrome b</fullName>
    </recommendedName>
    <alternativeName>
        <fullName>Complex III subunit 3</fullName>
    </alternativeName>
    <alternativeName>
        <fullName>Complex III subunit III</fullName>
    </alternativeName>
    <alternativeName>
        <fullName>Cytochrome b-c1 complex subunit 3</fullName>
    </alternativeName>
    <alternativeName>
        <fullName>Ubiquinol-cytochrome-c reductase complex cytochrome b subunit</fullName>
    </alternativeName>
</protein>
<keyword id="KW-0249">Electron transport</keyword>
<keyword id="KW-0349">Heme</keyword>
<keyword id="KW-0408">Iron</keyword>
<keyword id="KW-0472">Membrane</keyword>
<keyword id="KW-0479">Metal-binding</keyword>
<keyword id="KW-0496">Mitochondrion</keyword>
<keyword id="KW-0999">Mitochondrion inner membrane</keyword>
<keyword id="KW-0679">Respiratory chain</keyword>
<keyword id="KW-0812">Transmembrane</keyword>
<keyword id="KW-1133">Transmembrane helix</keyword>
<keyword id="KW-0813">Transport</keyword>
<keyword id="KW-0830">Ubiquinone</keyword>
<feature type="chain" id="PRO_0000061582" description="Cytochrome b">
    <location>
        <begin position="1"/>
        <end position="379"/>
    </location>
</feature>
<feature type="transmembrane region" description="Helical" evidence="2">
    <location>
        <begin position="33"/>
        <end position="53"/>
    </location>
</feature>
<feature type="transmembrane region" description="Helical" evidence="2">
    <location>
        <begin position="77"/>
        <end position="98"/>
    </location>
</feature>
<feature type="transmembrane region" description="Helical" evidence="2">
    <location>
        <begin position="113"/>
        <end position="133"/>
    </location>
</feature>
<feature type="transmembrane region" description="Helical" evidence="2">
    <location>
        <begin position="178"/>
        <end position="198"/>
    </location>
</feature>
<feature type="transmembrane region" description="Helical" evidence="2">
    <location>
        <begin position="226"/>
        <end position="246"/>
    </location>
</feature>
<feature type="transmembrane region" description="Helical" evidence="2">
    <location>
        <begin position="288"/>
        <end position="308"/>
    </location>
</feature>
<feature type="transmembrane region" description="Helical" evidence="2">
    <location>
        <begin position="320"/>
        <end position="340"/>
    </location>
</feature>
<feature type="transmembrane region" description="Helical" evidence="2">
    <location>
        <begin position="347"/>
        <end position="367"/>
    </location>
</feature>
<feature type="binding site" description="axial binding residue" evidence="2">
    <location>
        <position position="83"/>
    </location>
    <ligand>
        <name>heme b</name>
        <dbReference type="ChEBI" id="CHEBI:60344"/>
        <label>b562</label>
    </ligand>
    <ligandPart>
        <name>Fe</name>
        <dbReference type="ChEBI" id="CHEBI:18248"/>
    </ligandPart>
</feature>
<feature type="binding site" description="axial binding residue" evidence="2">
    <location>
        <position position="97"/>
    </location>
    <ligand>
        <name>heme b</name>
        <dbReference type="ChEBI" id="CHEBI:60344"/>
        <label>b566</label>
    </ligand>
    <ligandPart>
        <name>Fe</name>
        <dbReference type="ChEBI" id="CHEBI:18248"/>
    </ligandPart>
</feature>
<feature type="binding site" description="axial binding residue" evidence="2">
    <location>
        <position position="182"/>
    </location>
    <ligand>
        <name>heme b</name>
        <dbReference type="ChEBI" id="CHEBI:60344"/>
        <label>b562</label>
    </ligand>
    <ligandPart>
        <name>Fe</name>
        <dbReference type="ChEBI" id="CHEBI:18248"/>
    </ligandPart>
</feature>
<feature type="binding site" description="axial binding residue" evidence="2">
    <location>
        <position position="196"/>
    </location>
    <ligand>
        <name>heme b</name>
        <dbReference type="ChEBI" id="CHEBI:60344"/>
        <label>b566</label>
    </ligand>
    <ligandPart>
        <name>Fe</name>
        <dbReference type="ChEBI" id="CHEBI:18248"/>
    </ligandPart>
</feature>
<feature type="binding site" evidence="2">
    <location>
        <position position="201"/>
    </location>
    <ligand>
        <name>a ubiquinone</name>
        <dbReference type="ChEBI" id="CHEBI:16389"/>
    </ligand>
</feature>
<sequence>MTHLRKTHPLMKIINSSFIDLPTPSNISSWWNFGSLLGVCLVVQILTGLFLAMHYTSDTMTAFSSVTHICRDVNYGWLIRYLHANGASMFFICLFLHVGRGLYYGSYMFLETWNIGVLLLFAVMATAFMGYVLPWGQMSFWGATVITNLLSAIPYIGSDLVEWIWGGFSVDKATLTRFFAFHFILPFIIAALAGVHLLFLHETGSNNPSGLSSDADKIPFHPYYTIKDILGVLLLILALTSLVLFSPDLLGDPDNYTPANPLNTPPHIKPEWYFLFAYAILRSIPNKLGGVLALILSILVLAVIPFLHTSKQRSMMFRPFSQCLFWILVADLLTLTWIGGQPVEHPFIIIGQLASILYFLLILVLMPITSLFENNLLKW</sequence>
<reference key="1">
    <citation type="journal article" date="2003" name="J. Mammal.">
        <title>Phylogenetic diversification within shrews of the Sorex cinereus group (Soricidae).</title>
        <authorList>
            <person name="Demboski J.R."/>
            <person name="Cook J.A."/>
        </authorList>
    </citation>
    <scope>NUCLEOTIDE SEQUENCE [GENOMIC DNA]</scope>
    <source>
        <strain>Isolate NK 5904</strain>
    </source>
</reference>
<comment type="function">
    <text evidence="2">Component of the ubiquinol-cytochrome c reductase complex (complex III or cytochrome b-c1 complex) that is part of the mitochondrial respiratory chain. The b-c1 complex mediates electron transfer from ubiquinol to cytochrome c. Contributes to the generation of a proton gradient across the mitochondrial membrane that is then used for ATP synthesis.</text>
</comment>
<comment type="cofactor">
    <cofactor evidence="2">
        <name>heme b</name>
        <dbReference type="ChEBI" id="CHEBI:60344"/>
    </cofactor>
    <text evidence="2">Binds 2 heme b groups non-covalently.</text>
</comment>
<comment type="subunit">
    <text evidence="2">The cytochrome bc1 complex contains 11 subunits: 3 respiratory subunits (MT-CYB, CYC1 and UQCRFS1), 2 core proteins (UQCRC1 and UQCRC2) and 6 low-molecular weight proteins (UQCRH/QCR6, UQCRB/QCR7, UQCRQ/QCR8, UQCR10/QCR9, UQCR11/QCR10 and a cleavage product of UQCRFS1). This cytochrome bc1 complex then forms a dimer.</text>
</comment>
<comment type="subcellular location">
    <subcellularLocation>
        <location evidence="2">Mitochondrion inner membrane</location>
        <topology evidence="2">Multi-pass membrane protein</topology>
    </subcellularLocation>
</comment>
<comment type="miscellaneous">
    <text evidence="1">Heme 1 (or BL or b562) is low-potential and absorbs at about 562 nm, and heme 2 (or BH or b566) is high-potential and absorbs at about 566 nm.</text>
</comment>
<comment type="similarity">
    <text evidence="3 4">Belongs to the cytochrome b family.</text>
</comment>
<comment type="caution">
    <text evidence="2">The full-length protein contains only eight transmembrane helices, not nine as predicted by bioinformatics tools.</text>
</comment>
<organism>
    <name type="scientific">Sorex tenellus</name>
    <name type="common">Inyo shrew</name>
    <name type="synonym">Great Basin dwarf shrew</name>
    <dbReference type="NCBI Taxonomy" id="144777"/>
    <lineage>
        <taxon>Eukaryota</taxon>
        <taxon>Metazoa</taxon>
        <taxon>Chordata</taxon>
        <taxon>Craniata</taxon>
        <taxon>Vertebrata</taxon>
        <taxon>Euteleostomi</taxon>
        <taxon>Mammalia</taxon>
        <taxon>Eutheria</taxon>
        <taxon>Laurasiatheria</taxon>
        <taxon>Eulipotyphla</taxon>
        <taxon>Soricidae</taxon>
        <taxon>Soricinae</taxon>
        <taxon>Sorex</taxon>
    </lineage>
</organism>